<feature type="transit peptide" description="Chloroplast" evidence="3">
    <location>
        <begin position="1"/>
        <end position="56"/>
    </location>
</feature>
<feature type="chain" id="PRO_0000285997" description="Carotenoid cleavage dioxygenase 8, chloroplastic">
    <location>
        <begin position="57"/>
        <end position="570"/>
    </location>
</feature>
<feature type="binding site" evidence="2">
    <location>
        <position position="254"/>
    </location>
    <ligand>
        <name>Fe cation</name>
        <dbReference type="ChEBI" id="CHEBI:24875"/>
        <note>catalytic</note>
    </ligand>
</feature>
<feature type="binding site" evidence="2">
    <location>
        <position position="305"/>
    </location>
    <ligand>
        <name>Fe cation</name>
        <dbReference type="ChEBI" id="CHEBI:24875"/>
        <note>catalytic</note>
    </ligand>
</feature>
<feature type="binding site" evidence="2">
    <location>
        <position position="372"/>
    </location>
    <ligand>
        <name>Fe cation</name>
        <dbReference type="ChEBI" id="CHEBI:24875"/>
        <note>catalytic</note>
    </ligand>
</feature>
<feature type="binding site" evidence="2">
    <location>
        <position position="563"/>
    </location>
    <ligand>
        <name>Fe cation</name>
        <dbReference type="ChEBI" id="CHEBI:24875"/>
        <note>catalytic</note>
    </ligand>
</feature>
<organism>
    <name type="scientific">Arabidopsis thaliana</name>
    <name type="common">Mouse-ear cress</name>
    <dbReference type="NCBI Taxonomy" id="3702"/>
    <lineage>
        <taxon>Eukaryota</taxon>
        <taxon>Viridiplantae</taxon>
        <taxon>Streptophyta</taxon>
        <taxon>Embryophyta</taxon>
        <taxon>Tracheophyta</taxon>
        <taxon>Spermatophyta</taxon>
        <taxon>Magnoliopsida</taxon>
        <taxon>eudicotyledons</taxon>
        <taxon>Gunneridae</taxon>
        <taxon>Pentapetalae</taxon>
        <taxon>rosids</taxon>
        <taxon>malvids</taxon>
        <taxon>Brassicales</taxon>
        <taxon>Brassicaceae</taxon>
        <taxon>Camelineae</taxon>
        <taxon>Arabidopsis</taxon>
    </lineage>
</organism>
<name>CCD8_ARATH</name>
<keyword id="KW-0150">Chloroplast</keyword>
<keyword id="KW-0223">Dioxygenase</keyword>
<keyword id="KW-0408">Iron</keyword>
<keyword id="KW-0479">Metal-binding</keyword>
<keyword id="KW-0560">Oxidoreductase</keyword>
<keyword id="KW-0934">Plastid</keyword>
<keyword id="KW-1185">Reference proteome</keyword>
<keyword id="KW-0809">Transit peptide</keyword>
<accession>Q8VY26</accession>
<accession>Q9M079</accession>
<proteinExistence type="evidence at protein level"/>
<reference key="1">
    <citation type="journal article" date="1999" name="Nature">
        <title>Sequence and analysis of chromosome 4 of the plant Arabidopsis thaliana.</title>
        <authorList>
            <person name="Mayer K.F.X."/>
            <person name="Schueller C."/>
            <person name="Wambutt R."/>
            <person name="Murphy G."/>
            <person name="Volckaert G."/>
            <person name="Pohl T."/>
            <person name="Duesterhoeft A."/>
            <person name="Stiekema W."/>
            <person name="Entian K.-D."/>
            <person name="Terryn N."/>
            <person name="Harris B."/>
            <person name="Ansorge W."/>
            <person name="Brandt P."/>
            <person name="Grivell L.A."/>
            <person name="Rieger M."/>
            <person name="Weichselgartner M."/>
            <person name="de Simone V."/>
            <person name="Obermaier B."/>
            <person name="Mache R."/>
            <person name="Mueller M."/>
            <person name="Kreis M."/>
            <person name="Delseny M."/>
            <person name="Puigdomenech P."/>
            <person name="Watson M."/>
            <person name="Schmidtheini T."/>
            <person name="Reichert B."/>
            <person name="Portetelle D."/>
            <person name="Perez-Alonso M."/>
            <person name="Boutry M."/>
            <person name="Bancroft I."/>
            <person name="Vos P."/>
            <person name="Hoheisel J."/>
            <person name="Zimmermann W."/>
            <person name="Wedler H."/>
            <person name="Ridley P."/>
            <person name="Langham S.-A."/>
            <person name="McCullagh B."/>
            <person name="Bilham L."/>
            <person name="Robben J."/>
            <person name="van der Schueren J."/>
            <person name="Grymonprez B."/>
            <person name="Chuang Y.-J."/>
            <person name="Vandenbussche F."/>
            <person name="Braeken M."/>
            <person name="Weltjens I."/>
            <person name="Voet M."/>
            <person name="Bastiaens I."/>
            <person name="Aert R."/>
            <person name="Defoor E."/>
            <person name="Weitzenegger T."/>
            <person name="Bothe G."/>
            <person name="Ramsperger U."/>
            <person name="Hilbert H."/>
            <person name="Braun M."/>
            <person name="Holzer E."/>
            <person name="Brandt A."/>
            <person name="Peters S."/>
            <person name="van Staveren M."/>
            <person name="Dirkse W."/>
            <person name="Mooijman P."/>
            <person name="Klein Lankhorst R."/>
            <person name="Rose M."/>
            <person name="Hauf J."/>
            <person name="Koetter P."/>
            <person name="Berneiser S."/>
            <person name="Hempel S."/>
            <person name="Feldpausch M."/>
            <person name="Lamberth S."/>
            <person name="Van den Daele H."/>
            <person name="De Keyser A."/>
            <person name="Buysshaert C."/>
            <person name="Gielen J."/>
            <person name="Villarroel R."/>
            <person name="De Clercq R."/>
            <person name="van Montagu M."/>
            <person name="Rogers J."/>
            <person name="Cronin A."/>
            <person name="Quail M.A."/>
            <person name="Bray-Allen S."/>
            <person name="Clark L."/>
            <person name="Doggett J."/>
            <person name="Hall S."/>
            <person name="Kay M."/>
            <person name="Lennard N."/>
            <person name="McLay K."/>
            <person name="Mayes R."/>
            <person name="Pettett A."/>
            <person name="Rajandream M.A."/>
            <person name="Lyne M."/>
            <person name="Benes V."/>
            <person name="Rechmann S."/>
            <person name="Borkova D."/>
            <person name="Bloecker H."/>
            <person name="Scharfe M."/>
            <person name="Grimm M."/>
            <person name="Loehnert T.-H."/>
            <person name="Dose S."/>
            <person name="de Haan M."/>
            <person name="Maarse A.C."/>
            <person name="Schaefer M."/>
            <person name="Mueller-Auer S."/>
            <person name="Gabel C."/>
            <person name="Fuchs M."/>
            <person name="Fartmann B."/>
            <person name="Granderath K."/>
            <person name="Dauner D."/>
            <person name="Herzl A."/>
            <person name="Neumann S."/>
            <person name="Argiriou A."/>
            <person name="Vitale D."/>
            <person name="Liguori R."/>
            <person name="Piravandi E."/>
            <person name="Massenet O."/>
            <person name="Quigley F."/>
            <person name="Clabauld G."/>
            <person name="Muendlein A."/>
            <person name="Felber R."/>
            <person name="Schnabl S."/>
            <person name="Hiller R."/>
            <person name="Schmidt W."/>
            <person name="Lecharny A."/>
            <person name="Aubourg S."/>
            <person name="Chefdor F."/>
            <person name="Cooke R."/>
            <person name="Berger C."/>
            <person name="Monfort A."/>
            <person name="Casacuberta E."/>
            <person name="Gibbons T."/>
            <person name="Weber N."/>
            <person name="Vandenbol M."/>
            <person name="Bargues M."/>
            <person name="Terol J."/>
            <person name="Torres A."/>
            <person name="Perez-Perez A."/>
            <person name="Purnelle B."/>
            <person name="Bent E."/>
            <person name="Johnson S."/>
            <person name="Tacon D."/>
            <person name="Jesse T."/>
            <person name="Heijnen L."/>
            <person name="Schwarz S."/>
            <person name="Scholler P."/>
            <person name="Heber S."/>
            <person name="Francs P."/>
            <person name="Bielke C."/>
            <person name="Frishman D."/>
            <person name="Haase D."/>
            <person name="Lemcke K."/>
            <person name="Mewes H.-W."/>
            <person name="Stocker S."/>
            <person name="Zaccaria P."/>
            <person name="Bevan M."/>
            <person name="Wilson R.K."/>
            <person name="de la Bastide M."/>
            <person name="Habermann K."/>
            <person name="Parnell L."/>
            <person name="Dedhia N."/>
            <person name="Gnoj L."/>
            <person name="Schutz K."/>
            <person name="Huang E."/>
            <person name="Spiegel L."/>
            <person name="Sekhon M."/>
            <person name="Murray J."/>
            <person name="Sheet P."/>
            <person name="Cordes M."/>
            <person name="Abu-Threideh J."/>
            <person name="Stoneking T."/>
            <person name="Kalicki J."/>
            <person name="Graves T."/>
            <person name="Harmon G."/>
            <person name="Edwards J."/>
            <person name="Latreille P."/>
            <person name="Courtney L."/>
            <person name="Cloud J."/>
            <person name="Abbott A."/>
            <person name="Scott K."/>
            <person name="Johnson D."/>
            <person name="Minx P."/>
            <person name="Bentley D."/>
            <person name="Fulton B."/>
            <person name="Miller N."/>
            <person name="Greco T."/>
            <person name="Kemp K."/>
            <person name="Kramer J."/>
            <person name="Fulton L."/>
            <person name="Mardis E."/>
            <person name="Dante M."/>
            <person name="Pepin K."/>
            <person name="Hillier L.W."/>
            <person name="Nelson J."/>
            <person name="Spieth J."/>
            <person name="Ryan E."/>
            <person name="Andrews S."/>
            <person name="Geisel C."/>
            <person name="Layman D."/>
            <person name="Du H."/>
            <person name="Ali J."/>
            <person name="Berghoff A."/>
            <person name="Jones K."/>
            <person name="Drone K."/>
            <person name="Cotton M."/>
            <person name="Joshu C."/>
            <person name="Antonoiu B."/>
            <person name="Zidanic M."/>
            <person name="Strong C."/>
            <person name="Sun H."/>
            <person name="Lamar B."/>
            <person name="Yordan C."/>
            <person name="Ma P."/>
            <person name="Zhong J."/>
            <person name="Preston R."/>
            <person name="Vil D."/>
            <person name="Shekher M."/>
            <person name="Matero A."/>
            <person name="Shah R."/>
            <person name="Swaby I.K."/>
            <person name="O'Shaughnessy A."/>
            <person name="Rodriguez M."/>
            <person name="Hoffman J."/>
            <person name="Till S."/>
            <person name="Granat S."/>
            <person name="Shohdy N."/>
            <person name="Hasegawa A."/>
            <person name="Hameed A."/>
            <person name="Lodhi M."/>
            <person name="Johnson A."/>
            <person name="Chen E."/>
            <person name="Marra M.A."/>
            <person name="Martienssen R."/>
            <person name="McCombie W.R."/>
        </authorList>
    </citation>
    <scope>NUCLEOTIDE SEQUENCE [LARGE SCALE GENOMIC DNA]</scope>
    <source>
        <strain>cv. Columbia</strain>
    </source>
</reference>
<reference key="2">
    <citation type="journal article" date="2017" name="Plant J.">
        <title>Araport11: a complete reannotation of the Arabidopsis thaliana reference genome.</title>
        <authorList>
            <person name="Cheng C.Y."/>
            <person name="Krishnakumar V."/>
            <person name="Chan A.P."/>
            <person name="Thibaud-Nissen F."/>
            <person name="Schobel S."/>
            <person name="Town C.D."/>
        </authorList>
    </citation>
    <scope>GENOME REANNOTATION</scope>
    <source>
        <strain>cv. Columbia</strain>
    </source>
</reference>
<reference key="3">
    <citation type="journal article" date="2003" name="Science">
        <title>Empirical analysis of transcriptional activity in the Arabidopsis genome.</title>
        <authorList>
            <person name="Yamada K."/>
            <person name="Lim J."/>
            <person name="Dale J.M."/>
            <person name="Chen H."/>
            <person name="Shinn P."/>
            <person name="Palm C.J."/>
            <person name="Southwick A.M."/>
            <person name="Wu H.C."/>
            <person name="Kim C.J."/>
            <person name="Nguyen M."/>
            <person name="Pham P.K."/>
            <person name="Cheuk R.F."/>
            <person name="Karlin-Newmann G."/>
            <person name="Liu S.X."/>
            <person name="Lam B."/>
            <person name="Sakano H."/>
            <person name="Wu T."/>
            <person name="Yu G."/>
            <person name="Miranda M."/>
            <person name="Quach H.L."/>
            <person name="Tripp M."/>
            <person name="Chang C.H."/>
            <person name="Lee J.M."/>
            <person name="Toriumi M.J."/>
            <person name="Chan M.M."/>
            <person name="Tang C.C."/>
            <person name="Onodera C.S."/>
            <person name="Deng J.M."/>
            <person name="Akiyama K."/>
            <person name="Ansari Y."/>
            <person name="Arakawa T."/>
            <person name="Banh J."/>
            <person name="Banno F."/>
            <person name="Bowser L."/>
            <person name="Brooks S.Y."/>
            <person name="Carninci P."/>
            <person name="Chao Q."/>
            <person name="Choy N."/>
            <person name="Enju A."/>
            <person name="Goldsmith A.D."/>
            <person name="Gurjal M."/>
            <person name="Hansen N.F."/>
            <person name="Hayashizaki Y."/>
            <person name="Johnson-Hopson C."/>
            <person name="Hsuan V.W."/>
            <person name="Iida K."/>
            <person name="Karnes M."/>
            <person name="Khan S."/>
            <person name="Koesema E."/>
            <person name="Ishida J."/>
            <person name="Jiang P.X."/>
            <person name="Jones T."/>
            <person name="Kawai J."/>
            <person name="Kamiya A."/>
            <person name="Meyers C."/>
            <person name="Nakajima M."/>
            <person name="Narusaka M."/>
            <person name="Seki M."/>
            <person name="Sakurai T."/>
            <person name="Satou M."/>
            <person name="Tamse R."/>
            <person name="Vaysberg M."/>
            <person name="Wallender E.K."/>
            <person name="Wong C."/>
            <person name="Yamamura Y."/>
            <person name="Yuan S."/>
            <person name="Shinozaki K."/>
            <person name="Davis R.W."/>
            <person name="Theologis A."/>
            <person name="Ecker J.R."/>
        </authorList>
    </citation>
    <scope>NUCLEOTIDE SEQUENCE [LARGE SCALE MRNA]</scope>
    <source>
        <strain>cv. Columbia</strain>
    </source>
</reference>
<reference key="4">
    <citation type="journal article" date="2003" name="Genes Dev.">
        <title>MAX4 and RMS1 are orthologous dioxygenase-like genes that regulate shoot branching in Arabidopsis and pea.</title>
        <authorList>
            <person name="Sorefan K."/>
            <person name="Booker J."/>
            <person name="Haurogne K."/>
            <person name="Goussot M."/>
            <person name="Bainbridge K."/>
            <person name="Foo E."/>
            <person name="Chatfield S."/>
            <person name="Ward S."/>
            <person name="Beveridge C."/>
            <person name="Rameau C."/>
            <person name="Leyser O."/>
        </authorList>
    </citation>
    <scope>FUNCTION</scope>
    <scope>TISSUE SPECIFICITY</scope>
    <scope>INDUCTION BY AUXIN</scope>
</reference>
<reference key="5">
    <citation type="journal article" date="2004" name="J. Biol. Chem.">
        <title>The biochemical characterization of two carotenoid cleavage enzymes from Arabidopsis indicates that a carotenoid-derived compound inhibits lateral branching.</title>
        <authorList>
            <person name="Schwartz S.H."/>
            <person name="Qin X."/>
            <person name="Loewen M.C."/>
        </authorList>
    </citation>
    <scope>FUNCTION</scope>
    <scope>DISRUPTION PHENOTYPE</scope>
</reference>
<reference key="6">
    <citation type="journal article" date="2005" name="Plant J.">
        <title>Hormonally controlled expression of the Arabidopsis MAX4 shoot branching regulatory gene.</title>
        <authorList>
            <person name="Bainbridge K."/>
            <person name="Sorefan K."/>
            <person name="Ward S."/>
            <person name="Leyser O."/>
        </authorList>
    </citation>
    <scope>INDUCTION BY AUXIN</scope>
</reference>
<reference key="7">
    <citation type="journal article" date="2006" name="Plant J.">
        <title>Characterization of three members of the Arabidopsis carotenoid cleavage dioxygenase family demonstrates the divergent roles of this multifunctional enzyme family.</title>
        <authorList>
            <person name="Auldridge M.E."/>
            <person name="Block A."/>
            <person name="Vogel J.T."/>
            <person name="Dabney-Smith C."/>
            <person name="Mila I."/>
            <person name="Bouzayen M."/>
            <person name="Magallanes-Lundback M."/>
            <person name="DellaPenna D."/>
            <person name="McCarty D.R."/>
            <person name="Klee H.J."/>
        </authorList>
    </citation>
    <scope>FUNCTION</scope>
    <scope>SUBCELLULAR LOCATION</scope>
    <scope>TISSUE SPECIFICITY</scope>
</reference>
<reference key="8">
    <citation type="journal article" date="2008" name="Biochem. J.">
        <title>Carotenoid oxygenases involved in plant branching catalyse a highly specific conserved apocarotenoid cleavage reaction.</title>
        <authorList>
            <person name="Alder A."/>
            <person name="Holdermann I."/>
            <person name="Beyer P."/>
            <person name="Al-Babili S."/>
        </authorList>
    </citation>
    <scope>CATALYTIC ACTIVITY</scope>
</reference>
<reference key="9">
    <citation type="journal article" date="2011" name="Plant Cell Rep.">
        <title>Vascular-specific activity of the Arabidopsis carotenoid cleavage dioxygenase 7 gene promoter.</title>
        <authorList>
            <person name="Liang Y.S."/>
            <person name="Jeon Y.A."/>
            <person name="Lim S.H."/>
            <person name="Kim J.K."/>
            <person name="Lee J.Y."/>
            <person name="Kim Y.M."/>
            <person name="Lee Y.H."/>
            <person name="Ha S.H."/>
        </authorList>
    </citation>
    <scope>TISSUE SPECIFICITY</scope>
</reference>
<reference key="10">
    <citation type="journal article" date="2012" name="Science">
        <title>The path from beta-carotene to carlactone, a strigolactone-like plant hormone.</title>
        <authorList>
            <person name="Alder A."/>
            <person name="Jamil M."/>
            <person name="Marzorati M."/>
            <person name="Bruno M."/>
            <person name="Vermathen M."/>
            <person name="Bigler P."/>
            <person name="Ghisla S."/>
            <person name="Bouwmeester H."/>
            <person name="Beyer P."/>
            <person name="Al-Babili S."/>
        </authorList>
    </citation>
    <scope>CATALYTIC ACTIVITY</scope>
</reference>
<reference key="11">
    <citation type="journal article" date="2013" name="Mol. Plant">
        <title>Selective mimics of strigolactone actions and their potential use for controlling damage caused by root parasitic weeds.</title>
        <authorList>
            <person name="Fukui K."/>
            <person name="Ito S."/>
            <person name="Asami T."/>
        </authorList>
    </citation>
    <scope>DISRUPTION PHENOTYPE</scope>
</reference>
<reference key="12">
    <citation type="journal article" date="2016" name="Proc. Natl. Acad. Sci. U.S.A.">
        <title>LATERAL BRANCHING OXIDOREDUCTASE acts in the final stages of strigolactone biosynthesis in Arabidopsis.</title>
        <authorList>
            <person name="Brewer P.B."/>
            <person name="Yoneyama K."/>
            <person name="Filardo F."/>
            <person name="Meyers E."/>
            <person name="Scaffidi A."/>
            <person name="Frickey T."/>
            <person name="Akiyama K."/>
            <person name="Seto Y."/>
            <person name="Dun E.A."/>
            <person name="Cremer J.E."/>
            <person name="Kerr S.C."/>
            <person name="Waters M.T."/>
            <person name="Flematti G.R."/>
            <person name="Mason M.G."/>
            <person name="Weiller G."/>
            <person name="Yamaguchi S."/>
            <person name="Nomura T."/>
            <person name="Smith S.M."/>
            <person name="Yoneyama K."/>
            <person name="Beveridge C.A."/>
        </authorList>
    </citation>
    <scope>FUNCTION</scope>
    <scope>DISRUPTION PHENOTYPE</scope>
    <source>
        <strain>cv. Columbia</strain>
        <strain>cv. Landsberg erecta</strain>
        <strain>cv. Wassilewskija-4</strain>
    </source>
</reference>
<reference key="13">
    <citation type="journal article" date="2019" name="PLoS Genet.">
        <title>Connective auxin transport contributes to strigolactone-mediated shoot branching control independent of the transcription factor BRC1.</title>
        <authorList>
            <person name="van Rongen M."/>
            <person name="Bennett T."/>
            <person name="Ticchiarelli F."/>
            <person name="Leyser O."/>
        </authorList>
    </citation>
    <scope>FUNCTION</scope>
    <scope>DISRUPTION PHENOTYPE</scope>
    <source>
        <strain>cv. Columbia</strain>
    </source>
</reference>
<evidence type="ECO:0000250" key="1"/>
<evidence type="ECO:0000250" key="2">
    <source>
        <dbReference type="UniProtKB" id="P74334"/>
    </source>
</evidence>
<evidence type="ECO:0000255" key="3"/>
<evidence type="ECO:0000269" key="4">
    <source>
    </source>
</evidence>
<evidence type="ECO:0000269" key="5">
    <source>
    </source>
</evidence>
<evidence type="ECO:0000269" key="6">
    <source>
    </source>
</evidence>
<evidence type="ECO:0000269" key="7">
    <source>
    </source>
</evidence>
<evidence type="ECO:0000269" key="8">
    <source>
    </source>
</evidence>
<evidence type="ECO:0000269" key="9">
    <source>
    </source>
</evidence>
<evidence type="ECO:0000269" key="10">
    <source>
    </source>
</evidence>
<evidence type="ECO:0000269" key="11">
    <source>
    </source>
</evidence>
<evidence type="ECO:0000269" key="12">
    <source>
    </source>
</evidence>
<evidence type="ECO:0000269" key="13">
    <source>
    </source>
</evidence>
<evidence type="ECO:0000303" key="14">
    <source>
    </source>
</evidence>
<evidence type="ECO:0000303" key="15">
    <source>
    </source>
</evidence>
<evidence type="ECO:0000305" key="16"/>
<evidence type="ECO:0000305" key="17">
    <source>
    </source>
</evidence>
<evidence type="ECO:0000305" key="18">
    <source>
    </source>
</evidence>
<evidence type="ECO:0000312" key="19">
    <source>
        <dbReference type="Araport" id="AT4G32810"/>
    </source>
</evidence>
<evidence type="ECO:0000312" key="20">
    <source>
        <dbReference type="EMBL" id="CAB79998.1"/>
    </source>
</evidence>
<comment type="function">
    <text evidence="4 5 7 12 13">Involved in strigolactones biosynthesis by cleaving the C(27) 9-cis-10'-apo-beta-carotenal produced by CCD7 (PubMed:27194725). Produces the C(19) carlactone and a C(8) hydroxyaldehyde. Also shows lower activity with all-trans-10'-apo-beta-carotenal producing a C(9) dialdehyde and the C(18) 13-apo-beta-carotenone. Strigolactones are hormones that inhibit tillering and shoot branching through the MAX-dependent pathway, contribute to the regulation of shoot architectural response to phosphate-limiting conditions and function as rhizosphere signal that stimulates hyphal branching of arbuscular mycorrhizal fungi and trigger seed germination of root parasitic weeds (PubMed:27194725, PubMed:30865619). Also active on other carotenoid substrates like licopene or zeaxanthin.</text>
</comment>
<comment type="catalytic activity">
    <reaction evidence="10">
        <text>9-cis-10'-apo-beta-carotenal + 2 O2 = (2E,4E,6E)-7-hydroxy-4-methylhepta-2,4,6-trienal + (11R)-carlactone</text>
        <dbReference type="Rhea" id="RHEA:34403"/>
        <dbReference type="ChEBI" id="CHEBI:15379"/>
        <dbReference type="ChEBI" id="CHEBI:67191"/>
        <dbReference type="ChEBI" id="CHEBI:67192"/>
        <dbReference type="ChEBI" id="CHEBI:194508"/>
        <dbReference type="EC" id="1.13.11.69"/>
    </reaction>
</comment>
<comment type="catalytic activity">
    <reaction evidence="9">
        <text>all-trans-10'-apo-beta-carotenal + O2 = (2E,4E,6E)-4-methylocta-2,4,6-trienedial + 13-apo-beta-carotenone</text>
        <dbReference type="Rhea" id="RHEA:26401"/>
        <dbReference type="ChEBI" id="CHEBI:15379"/>
        <dbReference type="ChEBI" id="CHEBI:53153"/>
        <dbReference type="ChEBI" id="CHEBI:53175"/>
        <dbReference type="ChEBI" id="CHEBI:53176"/>
        <dbReference type="EC" id="1.13.11.70"/>
    </reaction>
</comment>
<comment type="cofactor">
    <cofactor evidence="1">
        <name>Fe(2+)</name>
        <dbReference type="ChEBI" id="CHEBI:29033"/>
    </cofactor>
    <text evidence="1">Binds 1 Fe(2+) ion per subunit.</text>
</comment>
<comment type="subcellular location">
    <subcellularLocation>
        <location evidence="7">Plastid</location>
        <location evidence="7">Chloroplast</location>
    </subcellularLocation>
</comment>
<comment type="tissue specificity">
    <text evidence="4 7 9">Expressed in flowers, siliques, inflorescence stems, petiole and leaves, and at a much higher level in roots.</text>
</comment>
<comment type="induction">
    <text evidence="4 6">Up-regulated by auxin in the root and hypocotyl.</text>
</comment>
<comment type="disruption phenotype">
    <text evidence="5 11 12 13">Increased shoot branching (PubMed:15342640, PubMed:23204501, PubMed:27194725, PubMed:30865619). The phenotype of lbo max4 double-mutant plants is similar to the single mutant max4 (PubMed:27194725).</text>
</comment>
<comment type="miscellaneous">
    <text evidence="12 17 18">The branching phenotypes of the max1, ccd7/max3 and ccd8/max4 mutants can be rescued by exogenous treatment with the synthetic strigolactone analogs GR24 and 4BD (Probable) (PubMed:27194725). The ccd8/max4 mutant also responds to carlactone (CL) and methyl carlactonoate (MeCLA), but not the lbo ccd8/max4 double mutant (Probable).</text>
</comment>
<comment type="similarity">
    <text evidence="16">Belongs to the carotenoid oxygenase family.</text>
</comment>
<comment type="sequence caution" evidence="16">
    <conflict type="erroneous gene model prediction">
        <sequence resource="EMBL-CDS" id="CAB79998"/>
    </conflict>
</comment>
<protein>
    <recommendedName>
        <fullName evidence="15">Carotenoid cleavage dioxygenase 8, chloroplastic</fullName>
        <shortName evidence="15">AtCCD8</shortName>
        <ecNumber evidence="10">1.13.11.69</ecNumber>
        <ecNumber evidence="8">1.13.11.70</ecNumber>
    </recommendedName>
    <alternativeName>
        <fullName>AtNCED8</fullName>
    </alternativeName>
    <alternativeName>
        <fullName evidence="14">Protein MORE AXILLARY BRANCHING 4</fullName>
    </alternativeName>
    <alternativeName>
        <fullName evidence="14">Protein MORE AXILLARY GROWTH 4</fullName>
    </alternativeName>
</protein>
<dbReference type="EC" id="1.13.11.69" evidence="10"/>
<dbReference type="EC" id="1.13.11.70" evidence="8"/>
<dbReference type="EMBL" id="AL161582">
    <property type="protein sequence ID" value="CAB79998.1"/>
    <property type="status" value="ALT_SEQ"/>
    <property type="molecule type" value="Genomic_DNA"/>
</dbReference>
<dbReference type="EMBL" id="CP002687">
    <property type="protein sequence ID" value="AEE86121.1"/>
    <property type="molecule type" value="Genomic_DNA"/>
</dbReference>
<dbReference type="EMBL" id="AY074264">
    <property type="protein sequence ID" value="AAL66961.1"/>
    <property type="molecule type" value="mRNA"/>
</dbReference>
<dbReference type="EMBL" id="AY133732">
    <property type="protein sequence ID" value="AAM91666.1"/>
    <property type="molecule type" value="mRNA"/>
</dbReference>
<dbReference type="PIR" id="T10688">
    <property type="entry name" value="T10688"/>
</dbReference>
<dbReference type="RefSeq" id="NP_195007.2">
    <property type="nucleotide sequence ID" value="NM_119434.4"/>
</dbReference>
<dbReference type="SMR" id="Q8VY26"/>
<dbReference type="FunCoup" id="Q8VY26">
    <property type="interactions" value="97"/>
</dbReference>
<dbReference type="STRING" id="3702.Q8VY26"/>
<dbReference type="PaxDb" id="3702-AT4G32810.1"/>
<dbReference type="ProteomicsDB" id="223915"/>
<dbReference type="EnsemblPlants" id="AT4G32810.1">
    <property type="protein sequence ID" value="AT4G32810.1"/>
    <property type="gene ID" value="AT4G32810"/>
</dbReference>
<dbReference type="GeneID" id="829417"/>
<dbReference type="Gramene" id="AT4G32810.1">
    <property type="protein sequence ID" value="AT4G32810.1"/>
    <property type="gene ID" value="AT4G32810"/>
</dbReference>
<dbReference type="KEGG" id="ath:AT4G32810"/>
<dbReference type="Araport" id="AT4G32810"/>
<dbReference type="TAIR" id="AT4G32810">
    <property type="gene designation" value="CCD8"/>
</dbReference>
<dbReference type="eggNOG" id="KOG1285">
    <property type="taxonomic scope" value="Eukaryota"/>
</dbReference>
<dbReference type="HOGENOM" id="CLU_016472_1_2_1"/>
<dbReference type="InParanoid" id="Q8VY26"/>
<dbReference type="OMA" id="WHIGDYN"/>
<dbReference type="OrthoDB" id="407010at2759"/>
<dbReference type="PhylomeDB" id="Q8VY26"/>
<dbReference type="BioCyc" id="ARA:AT4G32810-MONOMER"/>
<dbReference type="BioCyc" id="MetaCyc:AT4G32810-MONOMER"/>
<dbReference type="BRENDA" id="1.13.11.69">
    <property type="organism ID" value="399"/>
</dbReference>
<dbReference type="BRENDA" id="1.13.11.70">
    <property type="organism ID" value="399"/>
</dbReference>
<dbReference type="PRO" id="PR:Q8VY26"/>
<dbReference type="Proteomes" id="UP000006548">
    <property type="component" value="Chromosome 4"/>
</dbReference>
<dbReference type="ExpressionAtlas" id="Q8VY26">
    <property type="expression patterns" value="baseline and differential"/>
</dbReference>
<dbReference type="GO" id="GO:0009570">
    <property type="term" value="C:chloroplast stroma"/>
    <property type="evidence" value="ECO:0000314"/>
    <property type="project" value="TAIR"/>
</dbReference>
<dbReference type="GO" id="GO:0102396">
    <property type="term" value="F:9-cis-10'-apo-beta-carotenal cleavage oxygenase activity"/>
    <property type="evidence" value="ECO:0007669"/>
    <property type="project" value="UniProtKB-EC"/>
</dbReference>
<dbReference type="GO" id="GO:0102251">
    <property type="term" value="F:all-trans-beta-apo-10'-carotenal cleavage oxygenase activity"/>
    <property type="evidence" value="ECO:0007669"/>
    <property type="project" value="UniProtKB-EC"/>
</dbReference>
<dbReference type="GO" id="GO:0046872">
    <property type="term" value="F:metal ion binding"/>
    <property type="evidence" value="ECO:0007669"/>
    <property type="project" value="UniProtKB-KW"/>
</dbReference>
<dbReference type="GO" id="GO:0016702">
    <property type="term" value="F:oxidoreductase activity, acting on single donors with incorporation of molecular oxygen, incorporation of two atoms of oxygen"/>
    <property type="evidence" value="ECO:0000314"/>
    <property type="project" value="UniProtKB"/>
</dbReference>
<dbReference type="GO" id="GO:0009926">
    <property type="term" value="P:auxin polar transport"/>
    <property type="evidence" value="ECO:0000315"/>
    <property type="project" value="TAIR"/>
</dbReference>
<dbReference type="GO" id="GO:0016121">
    <property type="term" value="P:carotene catabolic process"/>
    <property type="evidence" value="ECO:0000314"/>
    <property type="project" value="UniProtKB"/>
</dbReference>
<dbReference type="GO" id="GO:0009965">
    <property type="term" value="P:leaf morphogenesis"/>
    <property type="evidence" value="ECO:0000315"/>
    <property type="project" value="TAIR"/>
</dbReference>
<dbReference type="GO" id="GO:0009733">
    <property type="term" value="P:response to auxin"/>
    <property type="evidence" value="ECO:0000315"/>
    <property type="project" value="TAIR"/>
</dbReference>
<dbReference type="GO" id="GO:0010223">
    <property type="term" value="P:secondary shoot formation"/>
    <property type="evidence" value="ECO:0000315"/>
    <property type="project" value="TAIR"/>
</dbReference>
<dbReference type="GO" id="GO:1901601">
    <property type="term" value="P:strigolactone biosynthetic process"/>
    <property type="evidence" value="ECO:0000314"/>
    <property type="project" value="UniProtKB"/>
</dbReference>
<dbReference type="GO" id="GO:0016124">
    <property type="term" value="P:xanthophyll catabolic process"/>
    <property type="evidence" value="ECO:0000314"/>
    <property type="project" value="TAIR"/>
</dbReference>
<dbReference type="InterPro" id="IPR004294">
    <property type="entry name" value="Carotenoid_Oase"/>
</dbReference>
<dbReference type="PANTHER" id="PTHR10543">
    <property type="entry name" value="BETA-CAROTENE DIOXYGENASE"/>
    <property type="match status" value="1"/>
</dbReference>
<dbReference type="PANTHER" id="PTHR10543:SF24">
    <property type="entry name" value="CAROTENOID ISOMEROOXYGENASE"/>
    <property type="match status" value="1"/>
</dbReference>
<dbReference type="Pfam" id="PF03055">
    <property type="entry name" value="RPE65"/>
    <property type="match status" value="1"/>
</dbReference>
<sequence length="570" mass="63957">MASLITTKAMMSHHHVLSSTRITTLYSDNSIGDQQIKTKPQVPHRLFARRIFGVTRAVINSAAPSPLPEKEKVEGERRCHVAWTSVQQENWEGELTVQGKIPTWLNGTYLRNGPGLWNIGDHDFRHLFDGYSTLVKLQFDGGRIFAAHRLLESDAYKAAKKHNRLCYREFSETPKSVIINKNPFSGIGEIVRLFSGESLTDNANTGVIKLGDGRVMCLTETQKGSILVDHETLETIGKFEYDDVLSDHMIQSAHPIVTETEMWTLIPDLVKPGYRVVRMEAGSNKREVVGRVRCRSGSWGPGWVHSFAVTENYVVIPEMPLRYSVKNLLRAEPTPLYKFEWCPQDGAFIHVMSKLTGEVVASVEVPAYVTFHFINAYEEDKNGDGKATVIIADCCEHNADTRILDMLRLDTLRSSHGHDVLPDARIGRFRIPLDGSKYGKLETAVEAEKHGRAMDMCSINPLYLGQKYRYVYACGAQRPCNFPNALSKVDIVEKKVKNWHEHGMIPSEPFFVPRPGATHEDDGVVISIVSEENGGSFAILLDGSSFEEIARAKFPYGLPYGLHGCWIPKD</sequence>
<gene>
    <name evidence="15" type="primary">CCD8</name>
    <name evidence="14" type="synonym">MAX4</name>
    <name type="synonym">NCED8</name>
    <name evidence="19" type="ordered locus">At4g32810</name>
    <name evidence="20" type="ORF">T16I18.20</name>
</gene>